<organism>
    <name type="scientific">Staphylococcus aureus (strain JH9)</name>
    <dbReference type="NCBI Taxonomy" id="359786"/>
    <lineage>
        <taxon>Bacteria</taxon>
        <taxon>Bacillati</taxon>
        <taxon>Bacillota</taxon>
        <taxon>Bacilli</taxon>
        <taxon>Bacillales</taxon>
        <taxon>Staphylococcaceae</taxon>
        <taxon>Staphylococcus</taxon>
    </lineage>
</organism>
<proteinExistence type="inferred from homology"/>
<comment type="function">
    <text evidence="1">Involved in mRNA degradation. Catalyzes the phosphorolysis of single-stranded polyribonucleotides processively in the 3'- to 5'-direction.</text>
</comment>
<comment type="catalytic activity">
    <reaction evidence="1">
        <text>RNA(n+1) + phosphate = RNA(n) + a ribonucleoside 5'-diphosphate</text>
        <dbReference type="Rhea" id="RHEA:22096"/>
        <dbReference type="Rhea" id="RHEA-COMP:14527"/>
        <dbReference type="Rhea" id="RHEA-COMP:17342"/>
        <dbReference type="ChEBI" id="CHEBI:43474"/>
        <dbReference type="ChEBI" id="CHEBI:57930"/>
        <dbReference type="ChEBI" id="CHEBI:140395"/>
        <dbReference type="EC" id="2.7.7.8"/>
    </reaction>
</comment>
<comment type="cofactor">
    <cofactor evidence="1">
        <name>Mg(2+)</name>
        <dbReference type="ChEBI" id="CHEBI:18420"/>
    </cofactor>
</comment>
<comment type="subcellular location">
    <subcellularLocation>
        <location evidence="1">Cytoplasm</location>
    </subcellularLocation>
</comment>
<comment type="similarity">
    <text evidence="1">Belongs to the polyribonucleotide nucleotidyltransferase family.</text>
</comment>
<sequence>MSQEKKVFKTEWAGRSLTIETGQLAKQANGAVLVRYGDTVVLSTATASKEPRDGDFFPLTVNYEEKMYAAGKIPGGFKKREGRPGDDATLTARLIDRPIRPLFPKGYKHDVQIMNMVLSADPDCSPQMAAMIGSSMALSVSDIPFQGPIAGVNVGYIDGKYIINPTVEEKEVSRLDLEVAGHKDAVNMVEAGASEITEQEMLEAIFFGHEEIQRLVDFQQQIVDHIQPVKQEFIPAERDEALVERVKSLTEEKGLKETVLTFDKQQRDENLDNLKEEIVNEFIDEEDPENELLIKEVYAILNELVKEEVRRLIADEKIRPDGRKPDEIRPLDSEVGILPRTHGSGLFTRGQTQALSVLTLGALGDYQLIDGLGPEEEKRFMHHYNFPNFSVGETGPVRAPGRREIGHGALGERALKYIIPDTADFPYTIRIVSEVLESNGSSSQASICGSTLALMDAGVPIKAPVAGIAMGLVTREDSYTILTDIQGMEDALGDMDFKVAGTKEGITAIQMDIKIDGLTREIIEEALEQARRGRLEIMNHMLQTIDQPRTELSAYAPKVVTMTIKPDKIRDVIGPGGKKINEIIDETGVKLDIEQDGTIFIGAVDQAMINRAREIIEEITREAEVGQTYQATVKRIEKYGAFVGLFPGKDALLHISQISKNRIEKVEDVLKIGDTIEVKITEIDKQGRVNASHRALEE</sequence>
<keyword id="KW-0963">Cytoplasm</keyword>
<keyword id="KW-0460">Magnesium</keyword>
<keyword id="KW-0479">Metal-binding</keyword>
<keyword id="KW-0548">Nucleotidyltransferase</keyword>
<keyword id="KW-0694">RNA-binding</keyword>
<keyword id="KW-0808">Transferase</keyword>
<name>PNP_STAA9</name>
<evidence type="ECO:0000255" key="1">
    <source>
        <dbReference type="HAMAP-Rule" id="MF_01595"/>
    </source>
</evidence>
<accession>A5ISF8</accession>
<feature type="chain" id="PRO_1000088000" description="Polyribonucleotide nucleotidyltransferase">
    <location>
        <begin position="1"/>
        <end position="698"/>
    </location>
</feature>
<feature type="domain" description="KH" evidence="1">
    <location>
        <begin position="557"/>
        <end position="616"/>
    </location>
</feature>
<feature type="domain" description="S1 motif" evidence="1">
    <location>
        <begin position="626"/>
        <end position="694"/>
    </location>
</feature>
<feature type="binding site" evidence="1">
    <location>
        <position position="490"/>
    </location>
    <ligand>
        <name>Mg(2+)</name>
        <dbReference type="ChEBI" id="CHEBI:18420"/>
    </ligand>
</feature>
<feature type="binding site" evidence="1">
    <location>
        <position position="496"/>
    </location>
    <ligand>
        <name>Mg(2+)</name>
        <dbReference type="ChEBI" id="CHEBI:18420"/>
    </ligand>
</feature>
<gene>
    <name evidence="1" type="primary">pnp</name>
    <name type="ordered locus">SaurJH9_1334</name>
</gene>
<reference key="1">
    <citation type="submission" date="2007-05" db="EMBL/GenBank/DDBJ databases">
        <title>Complete sequence of chromosome of Staphylococcus aureus subsp. aureus JH9.</title>
        <authorList>
            <consortium name="US DOE Joint Genome Institute"/>
            <person name="Copeland A."/>
            <person name="Lucas S."/>
            <person name="Lapidus A."/>
            <person name="Barry K."/>
            <person name="Detter J.C."/>
            <person name="Glavina del Rio T."/>
            <person name="Hammon N."/>
            <person name="Israni S."/>
            <person name="Pitluck S."/>
            <person name="Chain P."/>
            <person name="Malfatti S."/>
            <person name="Shin M."/>
            <person name="Vergez L."/>
            <person name="Schmutz J."/>
            <person name="Larimer F."/>
            <person name="Land M."/>
            <person name="Hauser L."/>
            <person name="Kyrpides N."/>
            <person name="Kim E."/>
            <person name="Tomasz A."/>
            <person name="Richardson P."/>
        </authorList>
    </citation>
    <scope>NUCLEOTIDE SEQUENCE [LARGE SCALE GENOMIC DNA]</scope>
    <source>
        <strain>JH9</strain>
    </source>
</reference>
<dbReference type="EC" id="2.7.7.8" evidence="1"/>
<dbReference type="EMBL" id="CP000703">
    <property type="protein sequence ID" value="ABQ49131.1"/>
    <property type="molecule type" value="Genomic_DNA"/>
</dbReference>
<dbReference type="RefSeq" id="WP_000076690.1">
    <property type="nucleotide sequence ID" value="NC_009487.1"/>
</dbReference>
<dbReference type="SMR" id="A5ISF8"/>
<dbReference type="KEGG" id="saj:SaurJH9_1334"/>
<dbReference type="HOGENOM" id="CLU_004217_2_2_9"/>
<dbReference type="GO" id="GO:0005829">
    <property type="term" value="C:cytosol"/>
    <property type="evidence" value="ECO:0007669"/>
    <property type="project" value="TreeGrafter"/>
</dbReference>
<dbReference type="GO" id="GO:0000175">
    <property type="term" value="F:3'-5'-RNA exonuclease activity"/>
    <property type="evidence" value="ECO:0007669"/>
    <property type="project" value="TreeGrafter"/>
</dbReference>
<dbReference type="GO" id="GO:0000287">
    <property type="term" value="F:magnesium ion binding"/>
    <property type="evidence" value="ECO:0007669"/>
    <property type="project" value="UniProtKB-UniRule"/>
</dbReference>
<dbReference type="GO" id="GO:0004654">
    <property type="term" value="F:polyribonucleotide nucleotidyltransferase activity"/>
    <property type="evidence" value="ECO:0007669"/>
    <property type="project" value="UniProtKB-UniRule"/>
</dbReference>
<dbReference type="GO" id="GO:0003723">
    <property type="term" value="F:RNA binding"/>
    <property type="evidence" value="ECO:0007669"/>
    <property type="project" value="UniProtKB-UniRule"/>
</dbReference>
<dbReference type="GO" id="GO:0006402">
    <property type="term" value="P:mRNA catabolic process"/>
    <property type="evidence" value="ECO:0007669"/>
    <property type="project" value="UniProtKB-UniRule"/>
</dbReference>
<dbReference type="GO" id="GO:0006396">
    <property type="term" value="P:RNA processing"/>
    <property type="evidence" value="ECO:0007669"/>
    <property type="project" value="InterPro"/>
</dbReference>
<dbReference type="CDD" id="cd02393">
    <property type="entry name" value="KH-I_PNPase"/>
    <property type="match status" value="1"/>
</dbReference>
<dbReference type="CDD" id="cd11363">
    <property type="entry name" value="RNase_PH_PNPase_1"/>
    <property type="match status" value="1"/>
</dbReference>
<dbReference type="CDD" id="cd11364">
    <property type="entry name" value="RNase_PH_PNPase_2"/>
    <property type="match status" value="1"/>
</dbReference>
<dbReference type="CDD" id="cd04472">
    <property type="entry name" value="S1_PNPase"/>
    <property type="match status" value="1"/>
</dbReference>
<dbReference type="FunFam" id="2.40.50.140:FF:000023">
    <property type="entry name" value="Polyribonucleotide nucleotidyltransferase"/>
    <property type="match status" value="1"/>
</dbReference>
<dbReference type="FunFam" id="3.30.1370.10:FF:000001">
    <property type="entry name" value="Polyribonucleotide nucleotidyltransferase"/>
    <property type="match status" value="1"/>
</dbReference>
<dbReference type="FunFam" id="3.30.230.70:FF:000001">
    <property type="entry name" value="Polyribonucleotide nucleotidyltransferase"/>
    <property type="match status" value="1"/>
</dbReference>
<dbReference type="FunFam" id="3.30.230.70:FF:000002">
    <property type="entry name" value="Polyribonucleotide nucleotidyltransferase"/>
    <property type="match status" value="1"/>
</dbReference>
<dbReference type="Gene3D" id="3.30.230.70">
    <property type="entry name" value="GHMP Kinase, N-terminal domain"/>
    <property type="match status" value="2"/>
</dbReference>
<dbReference type="Gene3D" id="3.30.1370.10">
    <property type="entry name" value="K Homology domain, type 1"/>
    <property type="match status" value="1"/>
</dbReference>
<dbReference type="Gene3D" id="2.40.50.140">
    <property type="entry name" value="Nucleic acid-binding proteins"/>
    <property type="match status" value="1"/>
</dbReference>
<dbReference type="HAMAP" id="MF_01595">
    <property type="entry name" value="PNPase"/>
    <property type="match status" value="1"/>
</dbReference>
<dbReference type="InterPro" id="IPR001247">
    <property type="entry name" value="ExoRNase_PH_dom1"/>
</dbReference>
<dbReference type="InterPro" id="IPR015847">
    <property type="entry name" value="ExoRNase_PH_dom2"/>
</dbReference>
<dbReference type="InterPro" id="IPR036345">
    <property type="entry name" value="ExoRNase_PH_dom2_sf"/>
</dbReference>
<dbReference type="InterPro" id="IPR004087">
    <property type="entry name" value="KH_dom"/>
</dbReference>
<dbReference type="InterPro" id="IPR004088">
    <property type="entry name" value="KH_dom_type_1"/>
</dbReference>
<dbReference type="InterPro" id="IPR036612">
    <property type="entry name" value="KH_dom_type_1_sf"/>
</dbReference>
<dbReference type="InterPro" id="IPR012340">
    <property type="entry name" value="NA-bd_OB-fold"/>
</dbReference>
<dbReference type="InterPro" id="IPR012162">
    <property type="entry name" value="PNPase"/>
</dbReference>
<dbReference type="InterPro" id="IPR027408">
    <property type="entry name" value="PNPase/RNase_PH_dom_sf"/>
</dbReference>
<dbReference type="InterPro" id="IPR015848">
    <property type="entry name" value="PNPase_PH_RNA-bd_bac/org-type"/>
</dbReference>
<dbReference type="InterPro" id="IPR036456">
    <property type="entry name" value="PNPase_PH_RNA-bd_sf"/>
</dbReference>
<dbReference type="InterPro" id="IPR020568">
    <property type="entry name" value="Ribosomal_Su5_D2-typ_SF"/>
</dbReference>
<dbReference type="InterPro" id="IPR003029">
    <property type="entry name" value="S1_domain"/>
</dbReference>
<dbReference type="NCBIfam" id="TIGR03591">
    <property type="entry name" value="polynuc_phos"/>
    <property type="match status" value="1"/>
</dbReference>
<dbReference type="NCBIfam" id="NF008805">
    <property type="entry name" value="PRK11824.1"/>
    <property type="match status" value="1"/>
</dbReference>
<dbReference type="PANTHER" id="PTHR11252">
    <property type="entry name" value="POLYRIBONUCLEOTIDE NUCLEOTIDYLTRANSFERASE"/>
    <property type="match status" value="1"/>
</dbReference>
<dbReference type="PANTHER" id="PTHR11252:SF0">
    <property type="entry name" value="POLYRIBONUCLEOTIDE NUCLEOTIDYLTRANSFERASE 1, MITOCHONDRIAL"/>
    <property type="match status" value="1"/>
</dbReference>
<dbReference type="Pfam" id="PF00013">
    <property type="entry name" value="KH_1"/>
    <property type="match status" value="1"/>
</dbReference>
<dbReference type="Pfam" id="PF03726">
    <property type="entry name" value="PNPase"/>
    <property type="match status" value="1"/>
</dbReference>
<dbReference type="Pfam" id="PF01138">
    <property type="entry name" value="RNase_PH"/>
    <property type="match status" value="2"/>
</dbReference>
<dbReference type="Pfam" id="PF03725">
    <property type="entry name" value="RNase_PH_C"/>
    <property type="match status" value="2"/>
</dbReference>
<dbReference type="Pfam" id="PF00575">
    <property type="entry name" value="S1"/>
    <property type="match status" value="1"/>
</dbReference>
<dbReference type="PIRSF" id="PIRSF005499">
    <property type="entry name" value="PNPase"/>
    <property type="match status" value="1"/>
</dbReference>
<dbReference type="SMART" id="SM00322">
    <property type="entry name" value="KH"/>
    <property type="match status" value="1"/>
</dbReference>
<dbReference type="SMART" id="SM00316">
    <property type="entry name" value="S1"/>
    <property type="match status" value="1"/>
</dbReference>
<dbReference type="SUPFAM" id="SSF54791">
    <property type="entry name" value="Eukaryotic type KH-domain (KH-domain type I)"/>
    <property type="match status" value="1"/>
</dbReference>
<dbReference type="SUPFAM" id="SSF50249">
    <property type="entry name" value="Nucleic acid-binding proteins"/>
    <property type="match status" value="1"/>
</dbReference>
<dbReference type="SUPFAM" id="SSF46915">
    <property type="entry name" value="Polynucleotide phosphorylase/guanosine pentaphosphate synthase (PNPase/GPSI), domain 3"/>
    <property type="match status" value="1"/>
</dbReference>
<dbReference type="SUPFAM" id="SSF55666">
    <property type="entry name" value="Ribonuclease PH domain 2-like"/>
    <property type="match status" value="2"/>
</dbReference>
<dbReference type="SUPFAM" id="SSF54211">
    <property type="entry name" value="Ribosomal protein S5 domain 2-like"/>
    <property type="match status" value="2"/>
</dbReference>
<dbReference type="PROSITE" id="PS50084">
    <property type="entry name" value="KH_TYPE_1"/>
    <property type="match status" value="1"/>
</dbReference>
<dbReference type="PROSITE" id="PS50126">
    <property type="entry name" value="S1"/>
    <property type="match status" value="1"/>
</dbReference>
<protein>
    <recommendedName>
        <fullName evidence="1">Polyribonucleotide nucleotidyltransferase</fullName>
        <ecNumber evidence="1">2.7.7.8</ecNumber>
    </recommendedName>
    <alternativeName>
        <fullName evidence="1">Polynucleotide phosphorylase</fullName>
        <shortName evidence="1">PNPase</shortName>
    </alternativeName>
</protein>